<organism>
    <name type="scientific">Burkholderia pseudomallei (strain 1106a)</name>
    <dbReference type="NCBI Taxonomy" id="357348"/>
    <lineage>
        <taxon>Bacteria</taxon>
        <taxon>Pseudomonadati</taxon>
        <taxon>Pseudomonadota</taxon>
        <taxon>Betaproteobacteria</taxon>
        <taxon>Burkholderiales</taxon>
        <taxon>Burkholderiaceae</taxon>
        <taxon>Burkholderia</taxon>
        <taxon>pseudomallei group</taxon>
    </lineage>
</organism>
<evidence type="ECO:0000255" key="1">
    <source>
        <dbReference type="HAMAP-Rule" id="MF_00338"/>
    </source>
</evidence>
<comment type="similarity">
    <text evidence="1">Belongs to the UPF0145 family.</text>
</comment>
<reference key="1">
    <citation type="journal article" date="2010" name="Genome Biol. Evol.">
        <title>Continuing evolution of Burkholderia mallei through genome reduction and large-scale rearrangements.</title>
        <authorList>
            <person name="Losada L."/>
            <person name="Ronning C.M."/>
            <person name="DeShazer D."/>
            <person name="Woods D."/>
            <person name="Fedorova N."/>
            <person name="Kim H.S."/>
            <person name="Shabalina S.A."/>
            <person name="Pearson T.R."/>
            <person name="Brinkac L."/>
            <person name="Tan P."/>
            <person name="Nandi T."/>
            <person name="Crabtree J."/>
            <person name="Badger J."/>
            <person name="Beckstrom-Sternberg S."/>
            <person name="Saqib M."/>
            <person name="Schutzer S.E."/>
            <person name="Keim P."/>
            <person name="Nierman W.C."/>
        </authorList>
    </citation>
    <scope>NUCLEOTIDE SEQUENCE [LARGE SCALE GENOMIC DNA]</scope>
    <source>
        <strain>1106a</strain>
    </source>
</reference>
<dbReference type="EMBL" id="CP000572">
    <property type="protein sequence ID" value="ABN91121.1"/>
    <property type="molecule type" value="Genomic_DNA"/>
</dbReference>
<dbReference type="RefSeq" id="WP_004193399.1">
    <property type="nucleotide sequence ID" value="NC_009076.1"/>
</dbReference>
<dbReference type="SMR" id="A3NUB7"/>
<dbReference type="KEGG" id="bpl:BURPS1106A_1667"/>
<dbReference type="HOGENOM" id="CLU_117144_1_1_4"/>
<dbReference type="Proteomes" id="UP000006738">
    <property type="component" value="Chromosome I"/>
</dbReference>
<dbReference type="Gene3D" id="3.30.110.70">
    <property type="entry name" value="Hypothetical protein apc22750. Chain B"/>
    <property type="match status" value="1"/>
</dbReference>
<dbReference type="HAMAP" id="MF_00338">
    <property type="entry name" value="UPF0145"/>
    <property type="match status" value="1"/>
</dbReference>
<dbReference type="InterPro" id="IPR035439">
    <property type="entry name" value="UPF0145_dom_sf"/>
</dbReference>
<dbReference type="InterPro" id="IPR002765">
    <property type="entry name" value="UPF0145_YbjQ-like"/>
</dbReference>
<dbReference type="PANTHER" id="PTHR34068:SF2">
    <property type="entry name" value="UPF0145 PROTEIN SCO3412"/>
    <property type="match status" value="1"/>
</dbReference>
<dbReference type="PANTHER" id="PTHR34068">
    <property type="entry name" value="UPF0145 PROTEIN YBJQ"/>
    <property type="match status" value="1"/>
</dbReference>
<dbReference type="Pfam" id="PF01906">
    <property type="entry name" value="YbjQ_1"/>
    <property type="match status" value="1"/>
</dbReference>
<dbReference type="SUPFAM" id="SSF117782">
    <property type="entry name" value="YbjQ-like"/>
    <property type="match status" value="1"/>
</dbReference>
<sequence length="111" mass="11953">MADPQLITTAFDIPGYRIERSLGVARGIVVRSRSIVGTFGASIQTLFGGNISLYTSLCERARQDAYERMIDEARRMGGNAIVGMRYDATEIASGVTEVLCYGTAVQAVRAG</sequence>
<accession>A3NUB7</accession>
<protein>
    <recommendedName>
        <fullName evidence="1">UPF0145 protein BURPS1106A_1667</fullName>
    </recommendedName>
</protein>
<proteinExistence type="inferred from homology"/>
<gene>
    <name type="ordered locus">BURPS1106A_1667</name>
</gene>
<name>Y1667_BURP0</name>
<feature type="chain" id="PRO_1000012982" description="UPF0145 protein BURPS1106A_1667">
    <location>
        <begin position="1"/>
        <end position="111"/>
    </location>
</feature>